<organism>
    <name type="scientific">Oryctolagus cuniculus</name>
    <name type="common">Rabbit</name>
    <dbReference type="NCBI Taxonomy" id="9986"/>
    <lineage>
        <taxon>Eukaryota</taxon>
        <taxon>Metazoa</taxon>
        <taxon>Chordata</taxon>
        <taxon>Craniata</taxon>
        <taxon>Vertebrata</taxon>
        <taxon>Euteleostomi</taxon>
        <taxon>Mammalia</taxon>
        <taxon>Eutheria</taxon>
        <taxon>Euarchontoglires</taxon>
        <taxon>Glires</taxon>
        <taxon>Lagomorpha</taxon>
        <taxon>Leporidae</taxon>
        <taxon>Oryctolagus</taxon>
    </lineage>
</organism>
<reference key="1">
    <citation type="journal article" date="1987" name="Nature">
        <title>Tissue-specific expression of three distinct types of rabbit protein kinase C.</title>
        <authorList>
            <person name="Ohno S."/>
            <person name="Kawasaki H."/>
            <person name="Imajoh S."/>
            <person name="Suzuki K."/>
            <person name="Inagaki M."/>
            <person name="Yokokura H."/>
            <person name="Sakoh T."/>
            <person name="Hidaka H."/>
        </authorList>
    </citation>
    <scope>NUCLEOTIDE SEQUENCE [MRNA] (ISOFORMS BETA-I AND BETA-II)</scope>
    <source>
        <tissue>Brain</tissue>
    </source>
</reference>
<dbReference type="EC" id="2.7.11.13" evidence="2"/>
<dbReference type="EMBL" id="X04795">
    <property type="protein sequence ID" value="CAA28482.1"/>
    <property type="molecule type" value="mRNA"/>
</dbReference>
<dbReference type="EMBL" id="X04793">
    <property type="protein sequence ID" value="CAA28480.1"/>
    <property type="molecule type" value="mRNA"/>
</dbReference>
<dbReference type="PIR" id="A26037">
    <property type="entry name" value="KIRBC2"/>
</dbReference>
<dbReference type="PIR" id="B26037">
    <property type="entry name" value="KIRBC1"/>
</dbReference>
<dbReference type="RefSeq" id="NP_001095193.1">
    <molecule id="P05772-2"/>
    <property type="nucleotide sequence ID" value="NM_001101723.1"/>
</dbReference>
<dbReference type="RefSeq" id="NP_001095195.1">
    <molecule id="P05772-1"/>
    <property type="nucleotide sequence ID" value="NM_001101725.1"/>
</dbReference>
<dbReference type="SMR" id="P05772"/>
<dbReference type="FunCoup" id="P05772">
    <property type="interactions" value="255"/>
</dbReference>
<dbReference type="STRING" id="9986.ENSOCUP00000046202"/>
<dbReference type="PaxDb" id="9986-ENSOCUP00000016353"/>
<dbReference type="GeneID" id="100037719"/>
<dbReference type="KEGG" id="ocu:100037719"/>
<dbReference type="CTD" id="5579"/>
<dbReference type="eggNOG" id="KOG0696">
    <property type="taxonomic scope" value="Eukaryota"/>
</dbReference>
<dbReference type="InParanoid" id="P05772"/>
<dbReference type="OrthoDB" id="63267at2759"/>
<dbReference type="BRENDA" id="2.7.11.13">
    <property type="organism ID" value="1749"/>
</dbReference>
<dbReference type="Proteomes" id="UP000001811">
    <property type="component" value="Unplaced"/>
</dbReference>
<dbReference type="GO" id="GO:0005737">
    <property type="term" value="C:cytoplasm"/>
    <property type="evidence" value="ECO:0007669"/>
    <property type="project" value="UniProtKB-SubCell"/>
</dbReference>
<dbReference type="GO" id="GO:0016020">
    <property type="term" value="C:membrane"/>
    <property type="evidence" value="ECO:0007669"/>
    <property type="project" value="UniProtKB-SubCell"/>
</dbReference>
<dbReference type="GO" id="GO:0005634">
    <property type="term" value="C:nucleus"/>
    <property type="evidence" value="ECO:0000250"/>
    <property type="project" value="UniProtKB"/>
</dbReference>
<dbReference type="GO" id="GO:0005524">
    <property type="term" value="F:ATP binding"/>
    <property type="evidence" value="ECO:0007669"/>
    <property type="project" value="UniProtKB-KW"/>
</dbReference>
<dbReference type="GO" id="GO:0004698">
    <property type="term" value="F:calcium,diacylglycerol-dependent serine/threonine kinase activity"/>
    <property type="evidence" value="ECO:0000250"/>
    <property type="project" value="UniProtKB"/>
</dbReference>
<dbReference type="GO" id="GO:0003682">
    <property type="term" value="F:chromatin binding"/>
    <property type="evidence" value="ECO:0000250"/>
    <property type="project" value="UniProtKB"/>
</dbReference>
<dbReference type="GO" id="GO:0042393">
    <property type="term" value="F:histone binding"/>
    <property type="evidence" value="ECO:0000250"/>
    <property type="project" value="UniProtKB"/>
</dbReference>
<dbReference type="GO" id="GO:0035403">
    <property type="term" value="F:histone H3T6 kinase activity"/>
    <property type="evidence" value="ECO:0000250"/>
    <property type="project" value="UniProtKB"/>
</dbReference>
<dbReference type="GO" id="GO:0050681">
    <property type="term" value="F:nuclear androgen receptor binding"/>
    <property type="evidence" value="ECO:0000250"/>
    <property type="project" value="UniProtKB"/>
</dbReference>
<dbReference type="GO" id="GO:0106310">
    <property type="term" value="F:protein serine kinase activity"/>
    <property type="evidence" value="ECO:0007669"/>
    <property type="project" value="RHEA"/>
</dbReference>
<dbReference type="GO" id="GO:0003713">
    <property type="term" value="F:transcription coactivator activity"/>
    <property type="evidence" value="ECO:0000250"/>
    <property type="project" value="UniProtKB"/>
</dbReference>
<dbReference type="GO" id="GO:0008270">
    <property type="term" value="F:zinc ion binding"/>
    <property type="evidence" value="ECO:0007669"/>
    <property type="project" value="UniProtKB-KW"/>
</dbReference>
<dbReference type="GO" id="GO:0002250">
    <property type="term" value="P:adaptive immune response"/>
    <property type="evidence" value="ECO:0007669"/>
    <property type="project" value="UniProtKB-KW"/>
</dbReference>
<dbReference type="GO" id="GO:0006915">
    <property type="term" value="P:apoptotic process"/>
    <property type="evidence" value="ECO:0007669"/>
    <property type="project" value="UniProtKB-KW"/>
</dbReference>
<dbReference type="GO" id="GO:0042113">
    <property type="term" value="P:B cell activation"/>
    <property type="evidence" value="ECO:0000250"/>
    <property type="project" value="UniProtKB"/>
</dbReference>
<dbReference type="GO" id="GO:0050853">
    <property type="term" value="P:B cell receptor signaling pathway"/>
    <property type="evidence" value="ECO:0000250"/>
    <property type="project" value="UniProtKB"/>
</dbReference>
<dbReference type="GO" id="GO:0010829">
    <property type="term" value="P:negative regulation of D-glucose transmembrane transport"/>
    <property type="evidence" value="ECO:0000250"/>
    <property type="project" value="UniProtKB"/>
</dbReference>
<dbReference type="GO" id="GO:0046627">
    <property type="term" value="P:negative regulation of insulin receptor signaling pathway"/>
    <property type="evidence" value="ECO:0000250"/>
    <property type="project" value="UniProtKB"/>
</dbReference>
<dbReference type="GO" id="GO:0045766">
    <property type="term" value="P:positive regulation of angiogenesis"/>
    <property type="evidence" value="ECO:0000250"/>
    <property type="project" value="UniProtKB"/>
</dbReference>
<dbReference type="GO" id="GO:0043123">
    <property type="term" value="P:positive regulation of canonical NF-kappaB signal transduction"/>
    <property type="evidence" value="ECO:0000250"/>
    <property type="project" value="UniProtKB"/>
</dbReference>
<dbReference type="GO" id="GO:0030949">
    <property type="term" value="P:positive regulation of vascular endothelial growth factor receptor signaling pathway"/>
    <property type="evidence" value="ECO:0000250"/>
    <property type="project" value="UniProtKB"/>
</dbReference>
<dbReference type="GO" id="GO:0070528">
    <property type="term" value="P:protein kinase C signaling"/>
    <property type="evidence" value="ECO:0000250"/>
    <property type="project" value="UniProtKB"/>
</dbReference>
<dbReference type="GO" id="GO:0010827">
    <property type="term" value="P:regulation of D-glucose transmembrane transport"/>
    <property type="evidence" value="ECO:0000250"/>
    <property type="project" value="UniProtKB"/>
</dbReference>
<dbReference type="GO" id="GO:0006357">
    <property type="term" value="P:regulation of transcription by RNA polymerase II"/>
    <property type="evidence" value="ECO:0000250"/>
    <property type="project" value="UniProtKB"/>
</dbReference>
<dbReference type="CDD" id="cd20833">
    <property type="entry name" value="C1_cPKC_rpt1"/>
    <property type="match status" value="1"/>
</dbReference>
<dbReference type="CDD" id="cd20836">
    <property type="entry name" value="C1_cPKC_rpt2"/>
    <property type="match status" value="1"/>
</dbReference>
<dbReference type="CDD" id="cd04026">
    <property type="entry name" value="C2_PKC_alpha_gamma"/>
    <property type="match status" value="1"/>
</dbReference>
<dbReference type="CDD" id="cd05616">
    <property type="entry name" value="STKc_cPKC_beta"/>
    <property type="match status" value="1"/>
</dbReference>
<dbReference type="FunFam" id="2.60.40.150:FF:000012">
    <property type="entry name" value="Kinase C alpha type"/>
    <property type="match status" value="1"/>
</dbReference>
<dbReference type="FunFam" id="1.10.510.10:FF:000023">
    <property type="entry name" value="Protein kinase C"/>
    <property type="match status" value="1"/>
</dbReference>
<dbReference type="FunFam" id="3.30.200.20:FF:000080">
    <property type="entry name" value="Protein kinase C"/>
    <property type="match status" value="1"/>
</dbReference>
<dbReference type="FunFam" id="3.30.60.20:FF:000006">
    <property type="entry name" value="Protein kinase C"/>
    <property type="match status" value="1"/>
</dbReference>
<dbReference type="FunFam" id="3.30.60.20:FF:000031">
    <property type="entry name" value="Protein kinase C alpha"/>
    <property type="match status" value="1"/>
</dbReference>
<dbReference type="Gene3D" id="3.30.60.20">
    <property type="match status" value="2"/>
</dbReference>
<dbReference type="Gene3D" id="2.60.40.150">
    <property type="entry name" value="C2 domain"/>
    <property type="match status" value="1"/>
</dbReference>
<dbReference type="Gene3D" id="3.30.200.20">
    <property type="entry name" value="Phosphorylase Kinase, domain 1"/>
    <property type="match status" value="2"/>
</dbReference>
<dbReference type="Gene3D" id="1.10.510.10">
    <property type="entry name" value="Transferase(Phosphotransferase) domain 1"/>
    <property type="match status" value="1"/>
</dbReference>
<dbReference type="InterPro" id="IPR000961">
    <property type="entry name" value="AGC-kinase_C"/>
</dbReference>
<dbReference type="InterPro" id="IPR046349">
    <property type="entry name" value="C1-like_sf"/>
</dbReference>
<dbReference type="InterPro" id="IPR000008">
    <property type="entry name" value="C2_dom"/>
</dbReference>
<dbReference type="InterPro" id="IPR035892">
    <property type="entry name" value="C2_domain_sf"/>
</dbReference>
<dbReference type="InterPro" id="IPR034664">
    <property type="entry name" value="cPKC-beta"/>
</dbReference>
<dbReference type="InterPro" id="IPR020454">
    <property type="entry name" value="DAG/PE-bd"/>
</dbReference>
<dbReference type="InterPro" id="IPR011009">
    <property type="entry name" value="Kinase-like_dom_sf"/>
</dbReference>
<dbReference type="InterPro" id="IPR002219">
    <property type="entry name" value="PE/DAG-bd"/>
</dbReference>
<dbReference type="InterPro" id="IPR017892">
    <property type="entry name" value="Pkinase_C"/>
</dbReference>
<dbReference type="InterPro" id="IPR000719">
    <property type="entry name" value="Prot_kinase_dom"/>
</dbReference>
<dbReference type="InterPro" id="IPR017441">
    <property type="entry name" value="Protein_kinase_ATP_BS"/>
</dbReference>
<dbReference type="InterPro" id="IPR014375">
    <property type="entry name" value="Protein_kinase_C_a/b/g"/>
</dbReference>
<dbReference type="InterPro" id="IPR008271">
    <property type="entry name" value="Ser/Thr_kinase_AS"/>
</dbReference>
<dbReference type="PANTHER" id="PTHR24351">
    <property type="entry name" value="RIBOSOMAL PROTEIN S6 KINASE"/>
    <property type="match status" value="1"/>
</dbReference>
<dbReference type="Pfam" id="PF00130">
    <property type="entry name" value="C1_1"/>
    <property type="match status" value="2"/>
</dbReference>
<dbReference type="Pfam" id="PF00168">
    <property type="entry name" value="C2"/>
    <property type="match status" value="1"/>
</dbReference>
<dbReference type="Pfam" id="PF00069">
    <property type="entry name" value="Pkinase"/>
    <property type="match status" value="1"/>
</dbReference>
<dbReference type="Pfam" id="PF00433">
    <property type="entry name" value="Pkinase_C"/>
    <property type="match status" value="1"/>
</dbReference>
<dbReference type="PIRSF" id="PIRSF000550">
    <property type="entry name" value="PKC_alpha"/>
    <property type="match status" value="1"/>
</dbReference>
<dbReference type="PRINTS" id="PR00360">
    <property type="entry name" value="C2DOMAIN"/>
</dbReference>
<dbReference type="PRINTS" id="PR00008">
    <property type="entry name" value="DAGPEDOMAIN"/>
</dbReference>
<dbReference type="SMART" id="SM00109">
    <property type="entry name" value="C1"/>
    <property type="match status" value="2"/>
</dbReference>
<dbReference type="SMART" id="SM00239">
    <property type="entry name" value="C2"/>
    <property type="match status" value="1"/>
</dbReference>
<dbReference type="SMART" id="SM00133">
    <property type="entry name" value="S_TK_X"/>
    <property type="match status" value="1"/>
</dbReference>
<dbReference type="SMART" id="SM00220">
    <property type="entry name" value="S_TKc"/>
    <property type="match status" value="1"/>
</dbReference>
<dbReference type="SUPFAM" id="SSF49562">
    <property type="entry name" value="C2 domain (Calcium/lipid-binding domain, CaLB)"/>
    <property type="match status" value="1"/>
</dbReference>
<dbReference type="SUPFAM" id="SSF57889">
    <property type="entry name" value="Cysteine-rich domain"/>
    <property type="match status" value="2"/>
</dbReference>
<dbReference type="SUPFAM" id="SSF56112">
    <property type="entry name" value="Protein kinase-like (PK-like)"/>
    <property type="match status" value="1"/>
</dbReference>
<dbReference type="PROSITE" id="PS51285">
    <property type="entry name" value="AGC_KINASE_CTER"/>
    <property type="match status" value="1"/>
</dbReference>
<dbReference type="PROSITE" id="PS50004">
    <property type="entry name" value="C2"/>
    <property type="match status" value="1"/>
</dbReference>
<dbReference type="PROSITE" id="PS00107">
    <property type="entry name" value="PROTEIN_KINASE_ATP"/>
    <property type="match status" value="1"/>
</dbReference>
<dbReference type="PROSITE" id="PS50011">
    <property type="entry name" value="PROTEIN_KINASE_DOM"/>
    <property type="match status" value="1"/>
</dbReference>
<dbReference type="PROSITE" id="PS00108">
    <property type="entry name" value="PROTEIN_KINASE_ST"/>
    <property type="match status" value="1"/>
</dbReference>
<dbReference type="PROSITE" id="PS00479">
    <property type="entry name" value="ZF_DAG_PE_1"/>
    <property type="match status" value="2"/>
</dbReference>
<dbReference type="PROSITE" id="PS50081">
    <property type="entry name" value="ZF_DAG_PE_2"/>
    <property type="match status" value="2"/>
</dbReference>
<evidence type="ECO:0000250" key="1"/>
<evidence type="ECO:0000250" key="2">
    <source>
        <dbReference type="UniProtKB" id="P05771"/>
    </source>
</evidence>
<evidence type="ECO:0000250" key="3">
    <source>
        <dbReference type="UniProtKB" id="P68403"/>
    </source>
</evidence>
<evidence type="ECO:0000250" key="4">
    <source>
        <dbReference type="UniProtKB" id="P68404"/>
    </source>
</evidence>
<evidence type="ECO:0000255" key="5"/>
<evidence type="ECO:0000255" key="6">
    <source>
        <dbReference type="PROSITE-ProRule" id="PRU00041"/>
    </source>
</evidence>
<evidence type="ECO:0000255" key="7">
    <source>
        <dbReference type="PROSITE-ProRule" id="PRU00159"/>
    </source>
</evidence>
<evidence type="ECO:0000255" key="8">
    <source>
        <dbReference type="PROSITE-ProRule" id="PRU00226"/>
    </source>
</evidence>
<evidence type="ECO:0000255" key="9">
    <source>
        <dbReference type="PROSITE-ProRule" id="PRU00618"/>
    </source>
</evidence>
<evidence type="ECO:0000255" key="10">
    <source>
        <dbReference type="PROSITE-ProRule" id="PRU10027"/>
    </source>
</evidence>
<evidence type="ECO:0000256" key="11">
    <source>
        <dbReference type="SAM" id="MobiDB-lite"/>
    </source>
</evidence>
<evidence type="ECO:0000303" key="12">
    <source>
    </source>
</evidence>
<evidence type="ECO:0000305" key="13"/>
<comment type="function">
    <text evidence="2 4">Calcium-activated, phospholipid- and diacylglycerol (DAG)-dependent serine/threonine-protein kinase involved in various cellular processes such as regulation of the B-cell receptor (BCR) signalosome, oxidative stress-induced apoptosis, androgen receptor-dependent transcription regulation, insulin signaling and endothelial cells proliferation. Plays a key role in B-cell activation by regulating BCR-induced NF-kappa-B activation. Mediates the activation of the canonical NF-kappa-B pathway (NFKB1) by direct phosphorylation of CARD11/CARMA1 at 'Ser-559', 'Ser-644' and 'Ser-652'. Phosphorylation induces CARD11/CARMA1 association with lipid rafts and recruitment of the BCL10-MALT1 complex as well as MAP3K7/TAK1, which then activates IKK complex, resulting in nuclear translocation and activation of NFKB1. Plays a direct role in the negative feedback regulation of the BCR signaling, by down-modulating BTK function via direct phosphorylation of BTK at 'Ser-180', which results in the alteration of BTK plasma membrane localization and in turn inhibition of BTK activity. Involved in apoptosis following oxidative damage: in case of oxidative conditions, specifically phosphorylates 'Ser-36' of isoform p66Shc of SHC1, leading to mitochondrial accumulation of p66Shc, where p66Shc acts as a reactive oxygen species producer. Acts as a coactivator of androgen receptor (ANDR)-dependent transcription, by being recruited to ANDR target genes and specifically mediating phosphorylation of 'Thr-6' of histone H3 (H3T6ph), a specific tag for epigenetic transcriptional activation that prevents demethylation of histone H3 'Lys-4' (H3K4me) by LSD1/KDM1A. In insulin signaling, may function downstream of IRS1 in muscle cells and mediate insulin-dependent DNA synthesis through the RAF1-MAPK/ERK signaling cascade. Participates in the regulation of glucose transport in adipocytes by negatively modulating the insulin-stimulated translocation of the glucose transporter SLC2A4/GLUT4. Phosphorylates SLC2A1/GLUT1, promoting glucose uptake by SLC2A1/GLUT1. Under high glucose in pancreatic beta-cells, is probably involved in the inhibition of the insulin gene transcription, via regulation of MYC expression. In endothelial cells, activation of PRKCB induces increased phosphorylation of RB1, increased VEGFA-induced cell proliferation, and inhibits PI3K/AKT-dependent nitric oxide synthase (NOS3/eNOS) regulation by insulin, which causes endothelial dysfunction. Also involved in triglyceride homeostasis. Phosphorylates ATF2 which promotes cooperation between ATF2 and JUN, activating transcription. Phosphorylates KLHL3 in response to angiotensin II signaling, decreasing the interaction between KLHL3 and WNK4 (By similarity). Phosphorylates and activates LRRK1, which phosphorylates RAB proteins involved in intracellular trafficking (By similarity).</text>
</comment>
<comment type="catalytic activity">
    <reaction evidence="2">
        <text>L-seryl-[protein] + ATP = O-phospho-L-seryl-[protein] + ADP + H(+)</text>
        <dbReference type="Rhea" id="RHEA:17989"/>
        <dbReference type="Rhea" id="RHEA-COMP:9863"/>
        <dbReference type="Rhea" id="RHEA-COMP:11604"/>
        <dbReference type="ChEBI" id="CHEBI:15378"/>
        <dbReference type="ChEBI" id="CHEBI:29999"/>
        <dbReference type="ChEBI" id="CHEBI:30616"/>
        <dbReference type="ChEBI" id="CHEBI:83421"/>
        <dbReference type="ChEBI" id="CHEBI:456216"/>
        <dbReference type="EC" id="2.7.11.13"/>
    </reaction>
</comment>
<comment type="catalytic activity">
    <reaction evidence="2">
        <text>L-threonyl-[protein] + ATP = O-phospho-L-threonyl-[protein] + ADP + H(+)</text>
        <dbReference type="Rhea" id="RHEA:46608"/>
        <dbReference type="Rhea" id="RHEA-COMP:11060"/>
        <dbReference type="Rhea" id="RHEA-COMP:11605"/>
        <dbReference type="ChEBI" id="CHEBI:15378"/>
        <dbReference type="ChEBI" id="CHEBI:30013"/>
        <dbReference type="ChEBI" id="CHEBI:30616"/>
        <dbReference type="ChEBI" id="CHEBI:61977"/>
        <dbReference type="ChEBI" id="CHEBI:456216"/>
        <dbReference type="EC" id="2.7.11.13"/>
    </reaction>
</comment>
<comment type="cofactor">
    <cofactor evidence="6">
        <name>Ca(2+)</name>
        <dbReference type="ChEBI" id="CHEBI:29108"/>
    </cofactor>
    <text evidence="3">Binds 3 Ca(2+) ions per subunit. The ions are bound to the C2 domain.</text>
</comment>
<comment type="activity regulation">
    <text evidence="1">Classical (or conventional) PKCs (PRKCA, PRKCB and PRKCG) are activated by calcium and diacylglycerol (DAG) in the presence of phosphatidylserine. Three specific sites; Thr-500 (activation loop of the kinase domain), Thr-642 (turn motif) and Ser-661 (hydrophobic region), need to be phosphorylated for its full activation. Specifically inhibited by enzastaurin (LY317615) (By similarity).</text>
</comment>
<comment type="subunit">
    <text evidence="1">Interacts with PDK1. Interacts in vitro with PRKCBP1. Interacts with PHLPP1 and PHLPP2; both proteins mediate its dephosphorylation. Interacts with KDM1A/LSD1, PKN1 and ANDR (By similarity).</text>
</comment>
<comment type="subcellular location">
    <subcellularLocation>
        <location evidence="1">Cytoplasm</location>
    </subcellularLocation>
    <subcellularLocation>
        <location evidence="1">Nucleus</location>
    </subcellularLocation>
    <subcellularLocation>
        <location evidence="1">Membrane</location>
        <topology evidence="1">Peripheral membrane protein</topology>
    </subcellularLocation>
</comment>
<comment type="alternative products">
    <event type="alternative splicing"/>
    <isoform>
        <id>P05772-1</id>
        <name>Beta-I</name>
        <sequence type="displayed"/>
    </isoform>
    <isoform>
        <id>P05772-2</id>
        <name>Beta-II</name>
        <sequence type="described" ref="VSP_004740"/>
    </isoform>
</comment>
<comment type="PTM">
    <text evidence="1">Phosphorylation on 'Thr-499' of isoform beta-I, within the activation loop, renders it competent to autophosphorylate. Subsequent autophosphorylation of Thr-642 maintains catalytic competence, and autophosphorylation on Ser-661 appears to release the kinase into the cytosol. Similarly, isoform beta-II is autophosphorylated on 'Thr-640' and 'Ser-659', subsequent to phosphorylation on Thr-500. Autophosphorylated on other sites i.e. in the N-terminal and hinge regions have no effect on enzyme activity. Phosphorylation at Tyr-662 by SYK induces binding with GRB2 and contributes to the activation of MAPK/ERK signaling cascade (By similarity).</text>
</comment>
<comment type="similarity">
    <text evidence="13">Belongs to the protein kinase superfamily. AGC Ser/Thr protein kinase family. PKC subfamily.</text>
</comment>
<proteinExistence type="evidence at transcript level"/>
<accession>P05772</accession>
<accession>P05773</accession>
<gene>
    <name type="primary">PRKCB</name>
    <name type="synonym">PRKCB1</name>
</gene>
<feature type="initiator methionine" description="Removed" evidence="2">
    <location>
        <position position="1"/>
    </location>
</feature>
<feature type="chain" id="PRO_0000055686" description="Protein kinase C beta type">
    <location>
        <begin position="2"/>
        <end position="671"/>
    </location>
</feature>
<feature type="domain" description="C2" evidence="6">
    <location>
        <begin position="158"/>
        <end position="275"/>
    </location>
</feature>
<feature type="domain" description="Protein kinase" evidence="7">
    <location>
        <begin position="342"/>
        <end position="600"/>
    </location>
</feature>
<feature type="domain" description="AGC-kinase C-terminal" evidence="9">
    <location>
        <begin position="601"/>
        <end position="671"/>
    </location>
</feature>
<feature type="zinc finger region" description="Phorbol-ester/DAG-type 1" evidence="8">
    <location>
        <begin position="36"/>
        <end position="86"/>
    </location>
</feature>
<feature type="zinc finger region" description="Phorbol-ester/DAG-type 2" evidence="8">
    <location>
        <begin position="101"/>
        <end position="151"/>
    </location>
</feature>
<feature type="region of interest" description="Disordered" evidence="11">
    <location>
        <begin position="313"/>
        <end position="332"/>
    </location>
</feature>
<feature type="region of interest" description="Disordered" evidence="11">
    <location>
        <begin position="614"/>
        <end position="635"/>
    </location>
</feature>
<feature type="compositionally biased region" description="Polar residues" evidence="11">
    <location>
        <begin position="322"/>
        <end position="331"/>
    </location>
</feature>
<feature type="compositionally biased region" description="Basic and acidic residues" evidence="11">
    <location>
        <begin position="623"/>
        <end position="635"/>
    </location>
</feature>
<feature type="active site" description="Proton acceptor" evidence="7 10">
    <location>
        <position position="466"/>
    </location>
</feature>
<feature type="binding site" evidence="3">
    <location>
        <position position="186"/>
    </location>
    <ligand>
        <name>Ca(2+)</name>
        <dbReference type="ChEBI" id="CHEBI:29108"/>
        <label>1</label>
    </ligand>
</feature>
<feature type="binding site" evidence="3">
    <location>
        <position position="187"/>
    </location>
    <ligand>
        <name>Ca(2+)</name>
        <dbReference type="ChEBI" id="CHEBI:29108"/>
        <label>1</label>
    </ligand>
</feature>
<feature type="binding site" evidence="3">
    <location>
        <position position="187"/>
    </location>
    <ligand>
        <name>Ca(2+)</name>
        <dbReference type="ChEBI" id="CHEBI:29108"/>
        <label>2</label>
    </ligand>
</feature>
<feature type="binding site" evidence="3">
    <location>
        <position position="193"/>
    </location>
    <ligand>
        <name>Ca(2+)</name>
        <dbReference type="ChEBI" id="CHEBI:29108"/>
        <label>2</label>
    </ligand>
</feature>
<feature type="binding site" evidence="3">
    <location>
        <position position="246"/>
    </location>
    <ligand>
        <name>Ca(2+)</name>
        <dbReference type="ChEBI" id="CHEBI:29108"/>
        <label>1</label>
    </ligand>
</feature>
<feature type="binding site" evidence="3">
    <location>
        <position position="246"/>
    </location>
    <ligand>
        <name>Ca(2+)</name>
        <dbReference type="ChEBI" id="CHEBI:29108"/>
        <label>2</label>
    </ligand>
</feature>
<feature type="binding site" evidence="3">
    <location>
        <position position="247"/>
    </location>
    <ligand>
        <name>Ca(2+)</name>
        <dbReference type="ChEBI" id="CHEBI:29108"/>
        <label>2</label>
    </ligand>
</feature>
<feature type="binding site" evidence="3">
    <location>
        <position position="248"/>
    </location>
    <ligand>
        <name>Ca(2+)</name>
        <dbReference type="ChEBI" id="CHEBI:29108"/>
        <label>1</label>
    </ligand>
</feature>
<feature type="binding site" evidence="3">
    <location>
        <position position="248"/>
    </location>
    <ligand>
        <name>Ca(2+)</name>
        <dbReference type="ChEBI" id="CHEBI:29108"/>
        <label>2</label>
    </ligand>
</feature>
<feature type="binding site" evidence="3">
    <location>
        <position position="248"/>
    </location>
    <ligand>
        <name>Ca(2+)</name>
        <dbReference type="ChEBI" id="CHEBI:29108"/>
        <label>3</label>
    </ligand>
</feature>
<feature type="binding site" evidence="3">
    <location>
        <position position="251"/>
    </location>
    <ligand>
        <name>Ca(2+)</name>
        <dbReference type="ChEBI" id="CHEBI:29108"/>
        <label>3</label>
    </ligand>
</feature>
<feature type="binding site" evidence="3">
    <location>
        <position position="252"/>
    </location>
    <ligand>
        <name>Ca(2+)</name>
        <dbReference type="ChEBI" id="CHEBI:29108"/>
        <label>3</label>
    </ligand>
</feature>
<feature type="binding site" evidence="3">
    <location>
        <position position="254"/>
    </location>
    <ligand>
        <name>Ca(2+)</name>
        <dbReference type="ChEBI" id="CHEBI:29108"/>
        <label>1</label>
    </ligand>
</feature>
<feature type="binding site" evidence="3">
    <location>
        <position position="254"/>
    </location>
    <ligand>
        <name>Ca(2+)</name>
        <dbReference type="ChEBI" id="CHEBI:29108"/>
        <label>3</label>
    </ligand>
</feature>
<feature type="binding site" evidence="7">
    <location>
        <begin position="348"/>
        <end position="356"/>
    </location>
    <ligand>
        <name>ATP</name>
        <dbReference type="ChEBI" id="CHEBI:30616"/>
    </ligand>
</feature>
<feature type="binding site" evidence="7">
    <location>
        <position position="371"/>
    </location>
    <ligand>
        <name>ATP</name>
        <dbReference type="ChEBI" id="CHEBI:30616"/>
    </ligand>
</feature>
<feature type="modified residue" description="N-acetylalanine" evidence="2">
    <location>
        <position position="2"/>
    </location>
</feature>
<feature type="modified residue" description="Phosphoserine" evidence="2">
    <location>
        <position position="11"/>
    </location>
</feature>
<feature type="modified residue" description="Phosphoserine; by autocatalysis" evidence="3 5">
    <location>
        <position position="16"/>
    </location>
</feature>
<feature type="modified residue" description="Phosphothreonine; by autocatalysis" evidence="3 5">
    <location>
        <position position="17"/>
    </location>
</feature>
<feature type="modified residue" description="Phosphoserine" evidence="2">
    <location>
        <position position="206"/>
    </location>
</feature>
<feature type="modified residue" description="Phosphothreonine; by autocatalysis" evidence="1">
    <location>
        <position position="250"/>
    </location>
</feature>
<feature type="modified residue" description="Phosphothreonine; by autocatalysis" evidence="3 5">
    <location>
        <position position="314"/>
    </location>
</feature>
<feature type="modified residue" description="Phosphothreonine; by autocatalysis" evidence="3 5">
    <location>
        <position position="324"/>
    </location>
</feature>
<feature type="modified residue" description="Phosphothreonine; by PDPK1" evidence="2">
    <location>
        <position position="500"/>
    </location>
</feature>
<feature type="modified residue" description="Phosphothreonine" evidence="2">
    <location>
        <position position="504"/>
    </location>
</feature>
<feature type="modified residue" description="Phosphothreonine; by autocatalysis" evidence="3">
    <location>
        <position position="635"/>
    </location>
</feature>
<feature type="modified residue" description="Phosphothreonine" evidence="3 5">
    <location>
        <position position="642"/>
    </location>
</feature>
<feature type="modified residue" description="Phosphoserine; by autocatalysis" evidence="2">
    <location>
        <position position="661"/>
    </location>
</feature>
<feature type="modified residue" description="Phosphotyrosine; by SYK" evidence="4">
    <location>
        <position position="662"/>
    </location>
</feature>
<feature type="splice variant" id="VSP_004740" description="In isoform Beta-II." evidence="12">
    <original>RDKRDTSNFDKEFTRQPVELTPTDKLFIMNLDQNEFAGFSYTNPEFVINV</original>
    <variation>CGRNAENFDRFFTRHPPVLTPPDQEVIRNIDQSEFEGFSFVNSEFLKPEVKS</variation>
    <location>
        <begin position="622"/>
        <end position="671"/>
    </location>
</feature>
<protein>
    <recommendedName>
        <fullName>Protein kinase C beta type</fullName>
        <shortName>PKC-B</shortName>
        <shortName>PKC-beta</shortName>
        <ecNumber evidence="2">2.7.11.13</ecNumber>
    </recommendedName>
</protein>
<name>KPCB_RABIT</name>
<keyword id="KW-0007">Acetylation</keyword>
<keyword id="KW-1064">Adaptive immunity</keyword>
<keyword id="KW-0025">Alternative splicing</keyword>
<keyword id="KW-0053">Apoptosis</keyword>
<keyword id="KW-0067">ATP-binding</keyword>
<keyword id="KW-0106">Calcium</keyword>
<keyword id="KW-0156">Chromatin regulator</keyword>
<keyword id="KW-0963">Cytoplasm</keyword>
<keyword id="KW-0391">Immunity</keyword>
<keyword id="KW-0418">Kinase</keyword>
<keyword id="KW-0472">Membrane</keyword>
<keyword id="KW-0479">Metal-binding</keyword>
<keyword id="KW-0547">Nucleotide-binding</keyword>
<keyword id="KW-0539">Nucleus</keyword>
<keyword id="KW-0597">Phosphoprotein</keyword>
<keyword id="KW-1185">Reference proteome</keyword>
<keyword id="KW-0677">Repeat</keyword>
<keyword id="KW-0723">Serine/threonine-protein kinase</keyword>
<keyword id="KW-0804">Transcription</keyword>
<keyword id="KW-0805">Transcription regulation</keyword>
<keyword id="KW-0808">Transferase</keyword>
<keyword id="KW-0862">Zinc</keyword>
<keyword id="KW-0863">Zinc-finger</keyword>
<sequence length="671" mass="76828">MADPAAGQPPSEGEESTVRFARKGALRQKNVHEVKNHKFTARFFKQPTFCSHCTDFIWGFGKQGFQCQVCCFVVHKRCHEFVTFSCPGADKGPASDDPRSKHKFKIHTYSSPTFCDHCGSLLYGLIHQGMKCDTCMMNVHKRCVMNVPSLCGTDHTERRGRIYIQAHIDREVLIVVVRDAKNLVPMDPNGLSDPYVKLKLIPDPKSESKQKTKTIKCSLNPEWNETFRFQLKESDKDRRLSVEIWDWDLTSRNDFMGSLSFGISELQKAGVDGWFKLLSQEEGEYFNVPVPPEGSEGNEELRQKFERAKIGQGTKTPEEKTTNTISKFDNNGNRDRMKLTDFNFLMVLGKGSFGKVMLSERKGTDELYAVKILKKDVVIQDDDVECTMVEKRVLALPGKPPFLTQLHSCFQTMDRLYFVMEYVNGGDLMYHIQQVGRFKEPHAVFYAAEIAIGLFFLQSKGIIYRDLKLDNVMLDSEGHIKIADFGMCKENIWDGVTTKTFCGTPDYIAPEIIAYQPYGKSVDWWAFGVLLYEMLAGQAPFEGEDEDELFQSIMEHNVAYPKSMSKEAVAICKGLMTKHPGKRLGCGPEGERDIKDHAFFRYIDWEKLERKEIQPPYKPKARDKRDTSNFDKEFTRQPVELTPTDKLFIMNLDQNEFAGFSYTNPEFVINV</sequence>